<proteinExistence type="evidence at protein level"/>
<feature type="transit peptide" description="Chloroplast" evidence="1">
    <location>
        <begin position="1"/>
        <end position="47"/>
    </location>
</feature>
<feature type="chain" id="PRO_0000417430" description="Calvin cycle protein CP12-1, chloroplastic">
    <location>
        <begin position="48"/>
        <end position="124"/>
    </location>
</feature>
<feature type="region of interest" description="Disordered" evidence="2">
    <location>
        <begin position="90"/>
        <end position="124"/>
    </location>
</feature>
<feature type="compositionally biased region" description="Acidic residues" evidence="2">
    <location>
        <begin position="105"/>
        <end position="116"/>
    </location>
</feature>
<feature type="disulfide bond" evidence="1">
    <location>
        <begin position="68"/>
        <end position="77"/>
    </location>
</feature>
<feature type="disulfide bond" evidence="1">
    <location>
        <begin position="110"/>
        <end position="119"/>
    </location>
</feature>
<feature type="sequence conflict" description="In Ref. 3; AAK97687/AAN28735." evidence="7" ref="3">
    <original>C</original>
    <variation>Y</variation>
    <location>
        <position position="119"/>
    </location>
</feature>
<reference key="1">
    <citation type="journal article" date="1999" name="Nature">
        <title>Sequence and analysis of chromosome 2 of the plant Arabidopsis thaliana.</title>
        <authorList>
            <person name="Lin X."/>
            <person name="Kaul S."/>
            <person name="Rounsley S.D."/>
            <person name="Shea T.P."/>
            <person name="Benito M.-I."/>
            <person name="Town C.D."/>
            <person name="Fujii C.Y."/>
            <person name="Mason T.M."/>
            <person name="Bowman C.L."/>
            <person name="Barnstead M.E."/>
            <person name="Feldblyum T.V."/>
            <person name="Buell C.R."/>
            <person name="Ketchum K.A."/>
            <person name="Lee J.J."/>
            <person name="Ronning C.M."/>
            <person name="Koo H.L."/>
            <person name="Moffat K.S."/>
            <person name="Cronin L.A."/>
            <person name="Shen M."/>
            <person name="Pai G."/>
            <person name="Van Aken S."/>
            <person name="Umayam L."/>
            <person name="Tallon L.J."/>
            <person name="Gill J.E."/>
            <person name="Adams M.D."/>
            <person name="Carrera A.J."/>
            <person name="Creasy T.H."/>
            <person name="Goodman H.M."/>
            <person name="Somerville C.R."/>
            <person name="Copenhaver G.P."/>
            <person name="Preuss D."/>
            <person name="Nierman W.C."/>
            <person name="White O."/>
            <person name="Eisen J.A."/>
            <person name="Salzberg S.L."/>
            <person name="Fraser C.M."/>
            <person name="Venter J.C."/>
        </authorList>
    </citation>
    <scope>NUCLEOTIDE SEQUENCE [LARGE SCALE GENOMIC DNA]</scope>
    <source>
        <strain>cv. Columbia</strain>
    </source>
</reference>
<reference key="2">
    <citation type="journal article" date="2017" name="Plant J.">
        <title>Araport11: a complete reannotation of the Arabidopsis thaliana reference genome.</title>
        <authorList>
            <person name="Cheng C.Y."/>
            <person name="Krishnakumar V."/>
            <person name="Chan A.P."/>
            <person name="Thibaud-Nissen F."/>
            <person name="Schobel S."/>
            <person name="Town C.D."/>
        </authorList>
    </citation>
    <scope>GENOME REANNOTATION</scope>
    <source>
        <strain>cv. Columbia</strain>
    </source>
</reference>
<reference key="3">
    <citation type="journal article" date="2003" name="Science">
        <title>Empirical analysis of transcriptional activity in the Arabidopsis genome.</title>
        <authorList>
            <person name="Yamada K."/>
            <person name="Lim J."/>
            <person name="Dale J.M."/>
            <person name="Chen H."/>
            <person name="Shinn P."/>
            <person name="Palm C.J."/>
            <person name="Southwick A.M."/>
            <person name="Wu H.C."/>
            <person name="Kim C.J."/>
            <person name="Nguyen M."/>
            <person name="Pham P.K."/>
            <person name="Cheuk R.F."/>
            <person name="Karlin-Newmann G."/>
            <person name="Liu S.X."/>
            <person name="Lam B."/>
            <person name="Sakano H."/>
            <person name="Wu T."/>
            <person name="Yu G."/>
            <person name="Miranda M."/>
            <person name="Quach H.L."/>
            <person name="Tripp M."/>
            <person name="Chang C.H."/>
            <person name="Lee J.M."/>
            <person name="Toriumi M.J."/>
            <person name="Chan M.M."/>
            <person name="Tang C.C."/>
            <person name="Onodera C.S."/>
            <person name="Deng J.M."/>
            <person name="Akiyama K."/>
            <person name="Ansari Y."/>
            <person name="Arakawa T."/>
            <person name="Banh J."/>
            <person name="Banno F."/>
            <person name="Bowser L."/>
            <person name="Brooks S.Y."/>
            <person name="Carninci P."/>
            <person name="Chao Q."/>
            <person name="Choy N."/>
            <person name="Enju A."/>
            <person name="Goldsmith A.D."/>
            <person name="Gurjal M."/>
            <person name="Hansen N.F."/>
            <person name="Hayashizaki Y."/>
            <person name="Johnson-Hopson C."/>
            <person name="Hsuan V.W."/>
            <person name="Iida K."/>
            <person name="Karnes M."/>
            <person name="Khan S."/>
            <person name="Koesema E."/>
            <person name="Ishida J."/>
            <person name="Jiang P.X."/>
            <person name="Jones T."/>
            <person name="Kawai J."/>
            <person name="Kamiya A."/>
            <person name="Meyers C."/>
            <person name="Nakajima M."/>
            <person name="Narusaka M."/>
            <person name="Seki M."/>
            <person name="Sakurai T."/>
            <person name="Satou M."/>
            <person name="Tamse R."/>
            <person name="Vaysberg M."/>
            <person name="Wallender E.K."/>
            <person name="Wong C."/>
            <person name="Yamamura Y."/>
            <person name="Yuan S."/>
            <person name="Shinozaki K."/>
            <person name="Davis R.W."/>
            <person name="Theologis A."/>
            <person name="Ecker J.R."/>
        </authorList>
    </citation>
    <scope>NUCLEOTIDE SEQUENCE [LARGE SCALE MRNA]</scope>
    <source>
        <strain>cv. Columbia</strain>
    </source>
</reference>
<reference key="4">
    <citation type="journal article" date="2005" name="J. Exp. Bot.">
        <title>Co-ordinated gene expression of photosynthetic glyceraldehyde-3-phosphate dehydrogenase, phosphoribulokinase, and CP12 in Arabidopsis thaliana.</title>
        <authorList>
            <person name="Marri L."/>
            <person name="Sparla F."/>
            <person name="Pupillo P."/>
            <person name="Trost P."/>
        </authorList>
    </citation>
    <scope>TISSUE SPECIFICITY</scope>
    <scope>INDUCTION BY SUCROSE</scope>
    <source>
        <strain>cv. Columbia</strain>
    </source>
</reference>
<reference key="5">
    <citation type="journal article" date="2008" name="J. Exp. Bot.">
        <title>Expression analysis of the Arabidopsis CP12 gene family suggests novel roles for these proteins in roots and floral tissues.</title>
        <authorList>
            <person name="Singh P."/>
            <person name="Kaloudas D."/>
            <person name="Raines C.A."/>
        </authorList>
    </citation>
    <scope>TISSUE SPECIFICITY</scope>
    <scope>DEVELOPMENTAL STAGE</scope>
    <scope>INDUCTION BY LIGHT AND HEAT</scope>
    <source>
        <strain>cv. Columbia</strain>
    </source>
</reference>
<reference key="6">
    <citation type="journal article" date="2008" name="PLoS ONE">
        <title>Sorting signals, N-terminal modifications and abundance of the chloroplast proteome.</title>
        <authorList>
            <person name="Zybailov B."/>
            <person name="Rutschow H."/>
            <person name="Friso G."/>
            <person name="Rudella A."/>
            <person name="Emanuelsson O."/>
            <person name="Sun Q."/>
            <person name="van Wijk K.J."/>
        </authorList>
    </citation>
    <scope>IDENTIFICATION BY MASS SPECTROMETRY</scope>
    <scope>SUBCELLULAR LOCATION [LARGE SCALE ANALYSIS]</scope>
</reference>
<reference key="7">
    <citation type="journal article" date="2009" name="Plant Physiol.">
        <title>Large-scale Arabidopsis phosphoproteome profiling reveals novel chloroplast kinase substrates and phosphorylation networks.</title>
        <authorList>
            <person name="Reiland S."/>
            <person name="Messerli G."/>
            <person name="Baerenfaller K."/>
            <person name="Gerrits B."/>
            <person name="Endler A."/>
            <person name="Grossmann J."/>
            <person name="Gruissem W."/>
            <person name="Baginsky S."/>
        </authorList>
    </citation>
    <scope>IDENTIFICATION BY MASS SPECTROMETRY [LARGE SCALE ANALYSIS]</scope>
</reference>
<reference key="8">
    <citation type="journal article" date="2010" name="J. Plant Physiol.">
        <title>In vitro characterization of Arabidopsis CP12 isoforms reveals common biochemical and molecular properties.</title>
        <authorList>
            <person name="Marri L."/>
            <person name="Pesaresi A."/>
            <person name="Valerio C."/>
            <person name="Lamba D."/>
            <person name="Pupillo P."/>
            <person name="Trost P."/>
            <person name="Sparla F."/>
        </authorList>
    </citation>
    <scope>FUNCTION</scope>
    <scope>SUBCELLULAR LOCATION</scope>
    <scope>SUBUNIT</scope>
    <scope>BIOPHYSICOCHEMICAL PROPERTIES</scope>
    <scope>DISULFIDE BOND</scope>
</reference>
<keyword id="KW-0113">Calvin cycle</keyword>
<keyword id="KW-0150">Chloroplast</keyword>
<keyword id="KW-0186">Copper</keyword>
<keyword id="KW-1015">Disulfide bond</keyword>
<keyword id="KW-0533">Nickel</keyword>
<keyword id="KW-0934">Plastid</keyword>
<keyword id="KW-1185">Reference proteome</keyword>
<keyword id="KW-0809">Transit peptide</keyword>
<name>CP121_ARATH</name>
<evidence type="ECO:0000250" key="1"/>
<evidence type="ECO:0000256" key="2">
    <source>
        <dbReference type="SAM" id="MobiDB-lite"/>
    </source>
</evidence>
<evidence type="ECO:0000269" key="3">
    <source>
    </source>
</evidence>
<evidence type="ECO:0000269" key="4">
    <source>
    </source>
</evidence>
<evidence type="ECO:0000269" key="5">
    <source>
    </source>
</evidence>
<evidence type="ECO:0000269" key="6">
    <source>
    </source>
</evidence>
<evidence type="ECO:0000305" key="7"/>
<sequence length="124" mass="13487">MTTIAAAGLNVATPRVVVRPVARVLGPVRLNYPWKFGSMKRMVVVKATSEGEISEKVEKSIQEAKETCADDPVSGECVAAWDEVEELSAAASHARDKKKAGGSDPLEEYCNDNPETDECRTYDN</sequence>
<gene>
    <name type="primary">CP12-1</name>
    <name type="ordered locus">At2g47400</name>
    <name type="ORF">T8I13.24</name>
</gene>
<accession>O22914</accession>
<accession>Q8RYE5</accession>
<accession>Q941E3</accession>
<protein>
    <recommendedName>
        <fullName>Calvin cycle protein CP12-1, chloroplastic</fullName>
    </recommendedName>
    <alternativeName>
        <fullName>CP12 domain-containing protein 1</fullName>
    </alternativeName>
    <alternativeName>
        <fullName>Chloroplast protein 12-1</fullName>
    </alternativeName>
</protein>
<comment type="function">
    <text evidence="6">Acts as a linker essential in the assembly of a core complex of PRK/GAPDH. Coordinates the reversible inactivation of chloroplast enzymes GAPDH and PRK during darkness in photosynthetic tissues.</text>
</comment>
<comment type="biophysicochemical properties">
    <redoxPotential>
        <text evidence="6">E(0) are -326 mV and -350 mV for the disulfide bonds at pH 7.9.</text>
    </redoxPotential>
</comment>
<comment type="subunit">
    <text evidence="1 6">Monomer (By similarity). Component of a complex that contains two dimers of PRK, two tetramers of GAPDH and CP12. CP12 associates with GAPDH, causing its conformation to change. This GAPDH/CP12 complex binds PRK to form a half-complex (one unit). This unit probably dimerizes due partially to interactions between the enzymes of each unit.</text>
</comment>
<comment type="subcellular location">
    <subcellularLocation>
        <location evidence="4 6">Plastid</location>
        <location evidence="4 6">Chloroplast</location>
    </subcellularLocation>
</comment>
<comment type="tissue specificity">
    <text evidence="3 5">Mostly expressed in flowers, hypocotyl, cotyledons, leaves, stems, and flower stalks. Barely detectable in roots and siliques. Present in root tips and lateral roots. Accumulates in the cotyledons of etiolated seedlings.</text>
</comment>
<comment type="developmental stage">
    <text evidence="5">In flowers, expressed in the sepals and the style. In siliques, present in the tip and the base, in funiculus and in mature seeds. Present in both dried and imbibed seeds, especially in the seed coat and micropyle.</text>
</comment>
<comment type="induction">
    <text evidence="3 5">Insensitive to light/darkness, anaerobic treatment and heat, but repressed by sucrose.</text>
</comment>
<comment type="PTM">
    <text>Contains two disulfide bonds; only the oxidized protein, with two disulfide bonds, is active in complex formation. The C-terminal disulfide is involved in the interaction with GAPDH and the N-terminal disulfide mediates the binding of PRK with this binary complex.</text>
</comment>
<comment type="miscellaneous">
    <text evidence="1">Binds copper and nickel ions. Copper ions catalyze the oxidation of reduced thiol groups and thus promote formation of the disulfide bonds required for linker activity (By similarity).</text>
</comment>
<comment type="similarity">
    <text evidence="7">Belongs to the CP12 family.</text>
</comment>
<comment type="sequence caution" evidence="7">
    <conflict type="erroneous gene model prediction">
        <sequence resource="EMBL-CDS" id="AAB63839"/>
    </conflict>
</comment>
<dbReference type="EMBL" id="AC002337">
    <property type="protein sequence ID" value="AAB63839.2"/>
    <property type="status" value="ALT_SEQ"/>
    <property type="molecule type" value="Genomic_DNA"/>
</dbReference>
<dbReference type="EMBL" id="CP002685">
    <property type="protein sequence ID" value="AEC10836.1"/>
    <property type="molecule type" value="Genomic_DNA"/>
</dbReference>
<dbReference type="EMBL" id="AY052217">
    <property type="protein sequence ID" value="AAK97687.1"/>
    <property type="molecule type" value="mRNA"/>
</dbReference>
<dbReference type="EMBL" id="AY062839">
    <property type="protein sequence ID" value="AAL32917.1"/>
    <property type="molecule type" value="mRNA"/>
</dbReference>
<dbReference type="EMBL" id="AY114595">
    <property type="protein sequence ID" value="AAM47914.1"/>
    <property type="molecule type" value="mRNA"/>
</dbReference>
<dbReference type="EMBL" id="AY143796">
    <property type="protein sequence ID" value="AAN28735.1"/>
    <property type="molecule type" value="mRNA"/>
</dbReference>
<dbReference type="PIR" id="G84914">
    <property type="entry name" value="G84914"/>
</dbReference>
<dbReference type="RefSeq" id="NP_566100.2">
    <property type="nucleotide sequence ID" value="NM_130308.3"/>
</dbReference>
<dbReference type="SMR" id="O22914"/>
<dbReference type="BioGRID" id="4688">
    <property type="interactions" value="3"/>
</dbReference>
<dbReference type="FunCoup" id="O22914">
    <property type="interactions" value="1110"/>
</dbReference>
<dbReference type="IntAct" id="O22914">
    <property type="interactions" value="4"/>
</dbReference>
<dbReference type="STRING" id="3702.O22914"/>
<dbReference type="iPTMnet" id="O22914"/>
<dbReference type="PaxDb" id="3702-AT2G47400.1"/>
<dbReference type="ProteomicsDB" id="220301"/>
<dbReference type="EnsemblPlants" id="AT2G47400.1">
    <property type="protein sequence ID" value="AT2G47400.1"/>
    <property type="gene ID" value="AT2G47400"/>
</dbReference>
<dbReference type="GeneID" id="819353"/>
<dbReference type="Gramene" id="AT2G47400.1">
    <property type="protein sequence ID" value="AT2G47400.1"/>
    <property type="gene ID" value="AT2G47400"/>
</dbReference>
<dbReference type="KEGG" id="ath:AT2G47400"/>
<dbReference type="Araport" id="AT2G47400"/>
<dbReference type="TAIR" id="AT2G47400">
    <property type="gene designation" value="CP12-1"/>
</dbReference>
<dbReference type="eggNOG" id="ENOG502S5GB">
    <property type="taxonomic scope" value="Eukaryota"/>
</dbReference>
<dbReference type="HOGENOM" id="CLU_137076_0_0_1"/>
<dbReference type="InParanoid" id="O22914"/>
<dbReference type="OMA" id="EEYCNDN"/>
<dbReference type="OrthoDB" id="4362at2759"/>
<dbReference type="PhylomeDB" id="O22914"/>
<dbReference type="PRO" id="PR:O22914"/>
<dbReference type="Proteomes" id="UP000006548">
    <property type="component" value="Chromosome 2"/>
</dbReference>
<dbReference type="ExpressionAtlas" id="O22914">
    <property type="expression patterns" value="baseline and differential"/>
</dbReference>
<dbReference type="GO" id="GO:0009507">
    <property type="term" value="C:chloroplast"/>
    <property type="evidence" value="ECO:0000314"/>
    <property type="project" value="TAIR"/>
</dbReference>
<dbReference type="GO" id="GO:0009941">
    <property type="term" value="C:chloroplast envelope"/>
    <property type="evidence" value="ECO:0007005"/>
    <property type="project" value="TAIR"/>
</dbReference>
<dbReference type="GO" id="GO:0009570">
    <property type="term" value="C:chloroplast stroma"/>
    <property type="evidence" value="ECO:0007005"/>
    <property type="project" value="TAIR"/>
</dbReference>
<dbReference type="GO" id="GO:0005829">
    <property type="term" value="C:cytosol"/>
    <property type="evidence" value="ECO:0007005"/>
    <property type="project" value="TAIR"/>
</dbReference>
<dbReference type="GO" id="GO:0032991">
    <property type="term" value="C:protein-containing complex"/>
    <property type="evidence" value="ECO:0000314"/>
    <property type="project" value="UniProtKB"/>
</dbReference>
<dbReference type="GO" id="GO:0005507">
    <property type="term" value="F:copper ion binding"/>
    <property type="evidence" value="ECO:0000250"/>
    <property type="project" value="UniProtKB"/>
</dbReference>
<dbReference type="GO" id="GO:0003729">
    <property type="term" value="F:mRNA binding"/>
    <property type="evidence" value="ECO:0000314"/>
    <property type="project" value="TAIR"/>
</dbReference>
<dbReference type="GO" id="GO:0016151">
    <property type="term" value="F:nickel cation binding"/>
    <property type="evidence" value="ECO:0000250"/>
    <property type="project" value="UniProtKB"/>
</dbReference>
<dbReference type="GO" id="GO:0080153">
    <property type="term" value="P:negative regulation of reductive pentose-phosphate cycle"/>
    <property type="evidence" value="ECO:0000314"/>
    <property type="project" value="TAIR"/>
</dbReference>
<dbReference type="GO" id="GO:0019253">
    <property type="term" value="P:reductive pentose-phosphate cycle"/>
    <property type="evidence" value="ECO:0007669"/>
    <property type="project" value="UniProtKB-KW"/>
</dbReference>
<dbReference type="GO" id="GO:0009744">
    <property type="term" value="P:response to sucrose"/>
    <property type="evidence" value="ECO:0000270"/>
    <property type="project" value="UniProtKB"/>
</dbReference>
<dbReference type="InterPro" id="IPR039314">
    <property type="entry name" value="CP12-like"/>
</dbReference>
<dbReference type="InterPro" id="IPR003823">
    <property type="entry name" value="CP12_dom"/>
</dbReference>
<dbReference type="PANTHER" id="PTHR33921:SF24">
    <property type="entry name" value="CALVIN CYCLE PROTEIN CP12-1, CHLOROPLASTIC"/>
    <property type="match status" value="1"/>
</dbReference>
<dbReference type="PANTHER" id="PTHR33921">
    <property type="entry name" value="CALVIN CYCLE PROTEIN CP12-2, CHLOROPLASTIC"/>
    <property type="match status" value="1"/>
</dbReference>
<dbReference type="Pfam" id="PF02672">
    <property type="entry name" value="CP12"/>
    <property type="match status" value="1"/>
</dbReference>
<dbReference type="SMART" id="SM01093">
    <property type="entry name" value="CP12"/>
    <property type="match status" value="1"/>
</dbReference>
<organism>
    <name type="scientific">Arabidopsis thaliana</name>
    <name type="common">Mouse-ear cress</name>
    <dbReference type="NCBI Taxonomy" id="3702"/>
    <lineage>
        <taxon>Eukaryota</taxon>
        <taxon>Viridiplantae</taxon>
        <taxon>Streptophyta</taxon>
        <taxon>Embryophyta</taxon>
        <taxon>Tracheophyta</taxon>
        <taxon>Spermatophyta</taxon>
        <taxon>Magnoliopsida</taxon>
        <taxon>eudicotyledons</taxon>
        <taxon>Gunneridae</taxon>
        <taxon>Pentapetalae</taxon>
        <taxon>rosids</taxon>
        <taxon>malvids</taxon>
        <taxon>Brassicales</taxon>
        <taxon>Brassicaceae</taxon>
        <taxon>Camelineae</taxon>
        <taxon>Arabidopsis</taxon>
    </lineage>
</organism>